<comment type="function">
    <text>May play a role in male fertility.</text>
</comment>
<comment type="subcellular location">
    <subcellularLocation>
        <location>Secreted</location>
    </subcellularLocation>
</comment>
<comment type="similarity">
    <text evidence="3">Belongs to the calycin superfamily. Lipocalin family.</text>
</comment>
<name>LCN6_MACMU</name>
<dbReference type="EMBL" id="AF303085">
    <property type="protein sequence ID" value="AAQ14495.1"/>
    <property type="molecule type" value="mRNA"/>
</dbReference>
<dbReference type="RefSeq" id="NP_001028003.1">
    <property type="nucleotide sequence ID" value="NM_001032831.1"/>
</dbReference>
<dbReference type="SMR" id="P62503"/>
<dbReference type="FunCoup" id="P62503">
    <property type="interactions" value="4"/>
</dbReference>
<dbReference type="STRING" id="9544.ENSMMUP00000024683"/>
<dbReference type="PaxDb" id="9544-ENSMMUP00000024683"/>
<dbReference type="GeneID" id="574148"/>
<dbReference type="KEGG" id="mcc:574148"/>
<dbReference type="CTD" id="158062"/>
<dbReference type="eggNOG" id="ENOG502T76S">
    <property type="taxonomic scope" value="Eukaryota"/>
</dbReference>
<dbReference type="HOGENOM" id="CLU_1622859_0_0_1"/>
<dbReference type="InParanoid" id="P62503"/>
<dbReference type="OrthoDB" id="9574594at2759"/>
<dbReference type="TreeFam" id="TF353074"/>
<dbReference type="Proteomes" id="UP000006718">
    <property type="component" value="Unassembled WGS sequence"/>
</dbReference>
<dbReference type="GO" id="GO:0005576">
    <property type="term" value="C:extracellular region"/>
    <property type="evidence" value="ECO:0007669"/>
    <property type="project" value="UniProtKB-SubCell"/>
</dbReference>
<dbReference type="GO" id="GO:0036094">
    <property type="term" value="F:small molecule binding"/>
    <property type="evidence" value="ECO:0007669"/>
    <property type="project" value="InterPro"/>
</dbReference>
<dbReference type="GO" id="GO:0007338">
    <property type="term" value="P:single fertilization"/>
    <property type="evidence" value="ECO:0007669"/>
    <property type="project" value="UniProtKB-KW"/>
</dbReference>
<dbReference type="CDD" id="cd19426">
    <property type="entry name" value="lipocalin_6"/>
    <property type="match status" value="1"/>
</dbReference>
<dbReference type="Gene3D" id="2.40.128.20">
    <property type="match status" value="1"/>
</dbReference>
<dbReference type="InterPro" id="IPR012674">
    <property type="entry name" value="Calycin"/>
</dbReference>
<dbReference type="InterPro" id="IPR002345">
    <property type="entry name" value="Lipocalin"/>
</dbReference>
<dbReference type="InterPro" id="IPR022272">
    <property type="entry name" value="Lipocalin_CS"/>
</dbReference>
<dbReference type="InterPro" id="IPR000566">
    <property type="entry name" value="Lipocln_cytosolic_FA-bd_dom"/>
</dbReference>
<dbReference type="PANTHER" id="PTHR11430:SF10">
    <property type="entry name" value="EPIDIDYMAL-SPECIFIC LIPOCALIN-6"/>
    <property type="match status" value="1"/>
</dbReference>
<dbReference type="PANTHER" id="PTHR11430">
    <property type="entry name" value="LIPOCALIN"/>
    <property type="match status" value="1"/>
</dbReference>
<dbReference type="Pfam" id="PF00061">
    <property type="entry name" value="Lipocalin"/>
    <property type="match status" value="1"/>
</dbReference>
<dbReference type="SUPFAM" id="SSF50814">
    <property type="entry name" value="Lipocalins"/>
    <property type="match status" value="1"/>
</dbReference>
<dbReference type="PROSITE" id="PS00213">
    <property type="entry name" value="LIPOCALIN"/>
    <property type="match status" value="1"/>
</dbReference>
<evidence type="ECO:0000250" key="1"/>
<evidence type="ECO:0000255" key="2"/>
<evidence type="ECO:0000305" key="3"/>
<sequence length="180" mass="19950">MGGLLLAALLALVAVPRAQAMWLGRLDPKQLLGPWYVLAVASREKSFAVEKDMKNVAGVVVTLTPENNLRLLSSQHGLQGCSQSVTELLKRNSGWVFENPSIGVLELRVLATNFRDYAIIFTQLEFGDEPFNTVELYSRREAASQEAMGLFTKWSRGLGFLSQQQAQLQKDLTCAHKILS</sequence>
<gene>
    <name type="primary">LCN6</name>
</gene>
<protein>
    <recommendedName>
        <fullName>Epididymal-specific lipocalin-6</fullName>
    </recommendedName>
</protein>
<keyword id="KW-1015">Disulfide bond</keyword>
<keyword id="KW-0278">Fertilization</keyword>
<keyword id="KW-1185">Reference proteome</keyword>
<keyword id="KW-0964">Secreted</keyword>
<keyword id="KW-0732">Signal</keyword>
<organism>
    <name type="scientific">Macaca mulatta</name>
    <name type="common">Rhesus macaque</name>
    <dbReference type="NCBI Taxonomy" id="9544"/>
    <lineage>
        <taxon>Eukaryota</taxon>
        <taxon>Metazoa</taxon>
        <taxon>Chordata</taxon>
        <taxon>Craniata</taxon>
        <taxon>Vertebrata</taxon>
        <taxon>Euteleostomi</taxon>
        <taxon>Mammalia</taxon>
        <taxon>Eutheria</taxon>
        <taxon>Euarchontoglires</taxon>
        <taxon>Primates</taxon>
        <taxon>Haplorrhini</taxon>
        <taxon>Catarrhini</taxon>
        <taxon>Cercopithecidae</taxon>
        <taxon>Cercopithecinae</taxon>
        <taxon>Macaca</taxon>
    </lineage>
</organism>
<accession>P62503</accession>
<accession>Q71SF5</accession>
<feature type="signal peptide" evidence="2">
    <location>
        <begin position="1"/>
        <end position="20"/>
    </location>
</feature>
<feature type="chain" id="PRO_0000017915" description="Epididymal-specific lipocalin-6">
    <location>
        <begin position="21"/>
        <end position="180"/>
    </location>
</feature>
<feature type="disulfide bond" evidence="1">
    <location>
        <begin position="81"/>
        <end position="174"/>
    </location>
</feature>
<proteinExistence type="evidence at transcript level"/>
<reference key="1">
    <citation type="journal article" date="2003" name="Reprod. Biol. Endocrinol.">
        <title>LCN6, a novel human epididymal lipocalin.</title>
        <authorList>
            <person name="Hamil K.G."/>
            <person name="Liu Q."/>
            <person name="Sivashanmugam P."/>
            <person name="Anbalagan M."/>
            <person name="Yenugu S."/>
            <person name="Soundararajan R."/>
            <person name="Grossman G."/>
            <person name="Rao A.J."/>
            <person name="Birse C.E."/>
            <person name="Ruben S.M."/>
            <person name="Richardson R.T."/>
            <person name="Zhang Y.L."/>
            <person name="O'Rand M.G."/>
            <person name="Petrusz P."/>
            <person name="French F.S."/>
            <person name="Hall S.H."/>
        </authorList>
    </citation>
    <scope>NUCLEOTIDE SEQUENCE [MRNA]</scope>
    <source>
        <tissue>Epididymis</tissue>
    </source>
</reference>